<reference key="1">
    <citation type="journal article" date="1999" name="Nat. Genet.">
        <title>Comparative genomes of Chlamydia pneumoniae and C. trachomatis.</title>
        <authorList>
            <person name="Kalman S."/>
            <person name="Mitchell W.P."/>
            <person name="Marathe R."/>
            <person name="Lammel C.J."/>
            <person name="Fan J."/>
            <person name="Hyman R.W."/>
            <person name="Olinger L."/>
            <person name="Grimwood J."/>
            <person name="Davis R.W."/>
            <person name="Stephens R.S."/>
        </authorList>
    </citation>
    <scope>NUCLEOTIDE SEQUENCE [LARGE SCALE GENOMIC DNA]</scope>
    <source>
        <strain>CWL029</strain>
    </source>
</reference>
<reference key="2">
    <citation type="journal article" date="2000" name="Nucleic Acids Res.">
        <title>Genome sequences of Chlamydia trachomatis MoPn and Chlamydia pneumoniae AR39.</title>
        <authorList>
            <person name="Read T.D."/>
            <person name="Brunham R.C."/>
            <person name="Shen C."/>
            <person name="Gill S.R."/>
            <person name="Heidelberg J.F."/>
            <person name="White O."/>
            <person name="Hickey E.K."/>
            <person name="Peterson J.D."/>
            <person name="Utterback T.R."/>
            <person name="Berry K.J."/>
            <person name="Bass S."/>
            <person name="Linher K.D."/>
            <person name="Weidman J.F."/>
            <person name="Khouri H.M."/>
            <person name="Craven B."/>
            <person name="Bowman C."/>
            <person name="Dodson R.J."/>
            <person name="Gwinn M.L."/>
            <person name="Nelson W.C."/>
            <person name="DeBoy R.T."/>
            <person name="Kolonay J.F."/>
            <person name="McClarty G."/>
            <person name="Salzberg S.L."/>
            <person name="Eisen J.A."/>
            <person name="Fraser C.M."/>
        </authorList>
    </citation>
    <scope>NUCLEOTIDE SEQUENCE [LARGE SCALE GENOMIC DNA]</scope>
    <source>
        <strain>AR39</strain>
    </source>
</reference>
<reference key="3">
    <citation type="journal article" date="2000" name="Nucleic Acids Res.">
        <title>Comparison of whole genome sequences of Chlamydia pneumoniae J138 from Japan and CWL029 from USA.</title>
        <authorList>
            <person name="Shirai M."/>
            <person name="Hirakawa H."/>
            <person name="Kimoto M."/>
            <person name="Tabuchi M."/>
            <person name="Kishi F."/>
            <person name="Ouchi K."/>
            <person name="Shiba T."/>
            <person name="Ishii K."/>
            <person name="Hattori M."/>
            <person name="Kuhara S."/>
            <person name="Nakazawa T."/>
        </authorList>
    </citation>
    <scope>NUCLEOTIDE SEQUENCE [LARGE SCALE GENOMIC DNA]</scope>
    <source>
        <strain>J138</strain>
    </source>
</reference>
<reference key="4">
    <citation type="submission" date="2002-05" db="EMBL/GenBank/DDBJ databases">
        <title>The genome sequence of Chlamydia pneumoniae TW183 and comparison with other Chlamydia strains based on whole genome sequence analysis.</title>
        <authorList>
            <person name="Geng M.M."/>
            <person name="Schuhmacher A."/>
            <person name="Muehldorfer I."/>
            <person name="Bensch K.W."/>
            <person name="Schaefer K.P."/>
            <person name="Schneider S."/>
            <person name="Pohl T."/>
            <person name="Essig A."/>
            <person name="Marre R."/>
            <person name="Melchers K."/>
        </authorList>
    </citation>
    <scope>NUCLEOTIDE SEQUENCE [LARGE SCALE GENOMIC DNA]</scope>
    <source>
        <strain>TW-183</strain>
    </source>
</reference>
<sequence length="106" mass="12151">MEPYAVIQTGSKQYQVRSGDVIDVELLGEVASDKEVIFQDVLFVFDGTKASLGSPTIANAQVKAEYLSHVKGEKVVAYKYKKRKNYHRKHGHRQKYLRVKIREILI</sequence>
<accession>Q9Z806</accession>
<accession>Q9JQ35</accession>
<protein>
    <recommendedName>
        <fullName evidence="1">Large ribosomal subunit protein bL21</fullName>
    </recommendedName>
    <alternativeName>
        <fullName evidence="2">50S ribosomal protein L21</fullName>
    </alternativeName>
</protein>
<gene>
    <name evidence="1" type="primary">rplU</name>
    <name type="synonym">rl21</name>
    <name type="ordered locus">CPn_0546</name>
    <name type="ordered locus">CP_0206</name>
    <name type="ordered locus">CpB0567</name>
</gene>
<proteinExistence type="inferred from homology"/>
<feature type="chain" id="PRO_0000180996" description="Large ribosomal subunit protein bL21">
    <location>
        <begin position="1"/>
        <end position="106"/>
    </location>
</feature>
<keyword id="KW-0687">Ribonucleoprotein</keyword>
<keyword id="KW-0689">Ribosomal protein</keyword>
<keyword id="KW-0694">RNA-binding</keyword>
<keyword id="KW-0699">rRNA-binding</keyword>
<dbReference type="EMBL" id="AE001363">
    <property type="protein sequence ID" value="AAD18686.1"/>
    <property type="molecule type" value="Genomic_DNA"/>
</dbReference>
<dbReference type="EMBL" id="AE002161">
    <property type="protein sequence ID" value="AAF38077.1"/>
    <property type="molecule type" value="Genomic_DNA"/>
</dbReference>
<dbReference type="EMBL" id="BA000008">
    <property type="protein sequence ID" value="BAA98752.1"/>
    <property type="molecule type" value="Genomic_DNA"/>
</dbReference>
<dbReference type="EMBL" id="AE009440">
    <property type="protein sequence ID" value="AAP98496.1"/>
    <property type="status" value="ALT_INIT"/>
    <property type="molecule type" value="Genomic_DNA"/>
</dbReference>
<dbReference type="PIR" id="C72065">
    <property type="entry name" value="C72065"/>
</dbReference>
<dbReference type="PIR" id="F86558">
    <property type="entry name" value="F86558"/>
</dbReference>
<dbReference type="RefSeq" id="NP_224742.1">
    <property type="nucleotide sequence ID" value="NC_000922.1"/>
</dbReference>
<dbReference type="RefSeq" id="WP_010883184.1">
    <property type="nucleotide sequence ID" value="NZ_LN847257.1"/>
</dbReference>
<dbReference type="SMR" id="Q9Z806"/>
<dbReference type="STRING" id="406984.CPK_ORF01060"/>
<dbReference type="GeneID" id="45050589"/>
<dbReference type="KEGG" id="cpa:CP_0206"/>
<dbReference type="KEGG" id="cpj:rl21"/>
<dbReference type="KEGG" id="cpn:CPn_0546"/>
<dbReference type="KEGG" id="cpt:CpB0567"/>
<dbReference type="PATRIC" id="fig|115713.3.peg.606"/>
<dbReference type="eggNOG" id="COG0261">
    <property type="taxonomic scope" value="Bacteria"/>
</dbReference>
<dbReference type="HOGENOM" id="CLU_061463_3_2_0"/>
<dbReference type="OMA" id="HRQPFTK"/>
<dbReference type="OrthoDB" id="9813334at2"/>
<dbReference type="Proteomes" id="UP000000583">
    <property type="component" value="Chromosome"/>
</dbReference>
<dbReference type="Proteomes" id="UP000000801">
    <property type="component" value="Chromosome"/>
</dbReference>
<dbReference type="GO" id="GO:0005737">
    <property type="term" value="C:cytoplasm"/>
    <property type="evidence" value="ECO:0007669"/>
    <property type="project" value="UniProtKB-ARBA"/>
</dbReference>
<dbReference type="GO" id="GO:1990904">
    <property type="term" value="C:ribonucleoprotein complex"/>
    <property type="evidence" value="ECO:0007669"/>
    <property type="project" value="UniProtKB-KW"/>
</dbReference>
<dbReference type="GO" id="GO:0005840">
    <property type="term" value="C:ribosome"/>
    <property type="evidence" value="ECO:0007669"/>
    <property type="project" value="UniProtKB-KW"/>
</dbReference>
<dbReference type="GO" id="GO:0019843">
    <property type="term" value="F:rRNA binding"/>
    <property type="evidence" value="ECO:0007669"/>
    <property type="project" value="UniProtKB-UniRule"/>
</dbReference>
<dbReference type="GO" id="GO:0003735">
    <property type="term" value="F:structural constituent of ribosome"/>
    <property type="evidence" value="ECO:0007669"/>
    <property type="project" value="InterPro"/>
</dbReference>
<dbReference type="GO" id="GO:0006412">
    <property type="term" value="P:translation"/>
    <property type="evidence" value="ECO:0007669"/>
    <property type="project" value="UniProtKB-UniRule"/>
</dbReference>
<dbReference type="HAMAP" id="MF_01363">
    <property type="entry name" value="Ribosomal_bL21"/>
    <property type="match status" value="1"/>
</dbReference>
<dbReference type="InterPro" id="IPR028909">
    <property type="entry name" value="bL21-like"/>
</dbReference>
<dbReference type="InterPro" id="IPR036164">
    <property type="entry name" value="bL21-like_sf"/>
</dbReference>
<dbReference type="InterPro" id="IPR001787">
    <property type="entry name" value="Ribosomal_bL21"/>
</dbReference>
<dbReference type="InterPro" id="IPR018258">
    <property type="entry name" value="Ribosomal_bL21_CS"/>
</dbReference>
<dbReference type="NCBIfam" id="TIGR00061">
    <property type="entry name" value="L21"/>
    <property type="match status" value="1"/>
</dbReference>
<dbReference type="PANTHER" id="PTHR21349">
    <property type="entry name" value="50S RIBOSOMAL PROTEIN L21"/>
    <property type="match status" value="1"/>
</dbReference>
<dbReference type="PANTHER" id="PTHR21349:SF0">
    <property type="entry name" value="LARGE RIBOSOMAL SUBUNIT PROTEIN BL21M"/>
    <property type="match status" value="1"/>
</dbReference>
<dbReference type="Pfam" id="PF00829">
    <property type="entry name" value="Ribosomal_L21p"/>
    <property type="match status" value="1"/>
</dbReference>
<dbReference type="SUPFAM" id="SSF141091">
    <property type="entry name" value="L21p-like"/>
    <property type="match status" value="1"/>
</dbReference>
<dbReference type="PROSITE" id="PS01169">
    <property type="entry name" value="RIBOSOMAL_L21"/>
    <property type="match status" value="1"/>
</dbReference>
<comment type="function">
    <text evidence="1">This protein binds to 23S rRNA in the presence of protein L20.</text>
</comment>
<comment type="subunit">
    <text evidence="1">Part of the 50S ribosomal subunit. Contacts protein L20.</text>
</comment>
<comment type="similarity">
    <text evidence="1">Belongs to the bacterial ribosomal protein bL21 family.</text>
</comment>
<comment type="sequence caution" evidence="2">
    <conflict type="erroneous initiation">
        <sequence resource="EMBL-CDS" id="AAP98496"/>
    </conflict>
</comment>
<name>RL21_CHLPN</name>
<evidence type="ECO:0000255" key="1">
    <source>
        <dbReference type="HAMAP-Rule" id="MF_01363"/>
    </source>
</evidence>
<evidence type="ECO:0000305" key="2"/>
<organism>
    <name type="scientific">Chlamydia pneumoniae</name>
    <name type="common">Chlamydophila pneumoniae</name>
    <dbReference type="NCBI Taxonomy" id="83558"/>
    <lineage>
        <taxon>Bacteria</taxon>
        <taxon>Pseudomonadati</taxon>
        <taxon>Chlamydiota</taxon>
        <taxon>Chlamydiia</taxon>
        <taxon>Chlamydiales</taxon>
        <taxon>Chlamydiaceae</taxon>
        <taxon>Chlamydia/Chlamydophila group</taxon>
        <taxon>Chlamydia</taxon>
    </lineage>
</organism>